<name>ARGA_EDWI9</name>
<gene>
    <name evidence="1" type="primary">argA</name>
    <name type="ordered locus">NT01EI_0810</name>
</gene>
<comment type="catalytic activity">
    <reaction evidence="1">
        <text>L-glutamate + acetyl-CoA = N-acetyl-L-glutamate + CoA + H(+)</text>
        <dbReference type="Rhea" id="RHEA:24292"/>
        <dbReference type="ChEBI" id="CHEBI:15378"/>
        <dbReference type="ChEBI" id="CHEBI:29985"/>
        <dbReference type="ChEBI" id="CHEBI:44337"/>
        <dbReference type="ChEBI" id="CHEBI:57287"/>
        <dbReference type="ChEBI" id="CHEBI:57288"/>
        <dbReference type="EC" id="2.3.1.1"/>
    </reaction>
</comment>
<comment type="pathway">
    <text evidence="1">Amino-acid biosynthesis; L-arginine biosynthesis; N(2)-acetyl-L-ornithine from L-glutamate: step 1/4.</text>
</comment>
<comment type="subunit">
    <text evidence="1">Homohexamer.</text>
</comment>
<comment type="subcellular location">
    <subcellularLocation>
        <location evidence="1">Cytoplasm</location>
    </subcellularLocation>
</comment>
<comment type="similarity">
    <text evidence="1">Belongs to the acetyltransferase family. ArgA subfamily.</text>
</comment>
<reference key="1">
    <citation type="submission" date="2009-03" db="EMBL/GenBank/DDBJ databases">
        <title>Complete genome sequence of Edwardsiella ictaluri 93-146.</title>
        <authorList>
            <person name="Williams M.L."/>
            <person name="Gillaspy A.F."/>
            <person name="Dyer D.W."/>
            <person name="Thune R.L."/>
            <person name="Waldbieser G.C."/>
            <person name="Schuster S.C."/>
            <person name="Gipson J."/>
            <person name="Zaitshik J."/>
            <person name="Landry C."/>
            <person name="Lawrence M.L."/>
        </authorList>
    </citation>
    <scope>NUCLEOTIDE SEQUENCE [LARGE SCALE GENOMIC DNA]</scope>
    <source>
        <strain>93-146</strain>
    </source>
</reference>
<accession>C5BH95</accession>
<protein>
    <recommendedName>
        <fullName evidence="1">Amino-acid acetyltransferase</fullName>
        <ecNumber evidence="1">2.3.1.1</ecNumber>
    </recommendedName>
    <alternativeName>
        <fullName evidence="1">N-acetylglutamate synthase</fullName>
        <shortName evidence="1">AGS</shortName>
        <shortName evidence="1">NAGS</shortName>
    </alternativeName>
</protein>
<proteinExistence type="inferred from homology"/>
<keyword id="KW-0012">Acyltransferase</keyword>
<keyword id="KW-0028">Amino-acid biosynthesis</keyword>
<keyword id="KW-0055">Arginine biosynthesis</keyword>
<keyword id="KW-0963">Cytoplasm</keyword>
<keyword id="KW-0808">Transferase</keyword>
<organism>
    <name type="scientific">Edwardsiella ictaluri (strain 93-146)</name>
    <dbReference type="NCBI Taxonomy" id="634503"/>
    <lineage>
        <taxon>Bacteria</taxon>
        <taxon>Pseudomonadati</taxon>
        <taxon>Pseudomonadota</taxon>
        <taxon>Gammaproteobacteria</taxon>
        <taxon>Enterobacterales</taxon>
        <taxon>Hafniaceae</taxon>
        <taxon>Edwardsiella</taxon>
    </lineage>
</organism>
<sequence>MKERSTELVQGFRHSVPYINAHRGKTFVIMLSGEAIAEANFVGIINDIALLHSLGIRLVVVYGARPQIDTLLREQRCDPRYHKQIRITDARTLALVKQAAGQVQLDITARLSMSLSNTPLAGAHINVVSGNFIIAQPLGVDDGVDYCHSGRIRRIDEAALRCQLDAGAIVLLGPVAVSVTGESFNLTTEEIATHLAIKLQAEKLIGFCAAQGVCSDDGSIAAELLPNEAEQRVSALEAAGKAAQASTRFLRGAITACRSGVGRSHLISYLEDGALLQELFSRDGIGTQIVMESAEQIRRANINDIGGILALIRPLEQQGILVRRSREQLEREIERFTLIERDSLTIACAALYPFPQERMGEMACVAVHPDYRNSARGEQLLQRITAQARQMGLEKLFVLTTRSLHWFQERGFQPVEVDMLPQQKQALYNYQRRSKILLTEL</sequence>
<dbReference type="EC" id="2.3.1.1" evidence="1"/>
<dbReference type="EMBL" id="CP001600">
    <property type="protein sequence ID" value="ACR68031.1"/>
    <property type="molecule type" value="Genomic_DNA"/>
</dbReference>
<dbReference type="RefSeq" id="WP_015870224.1">
    <property type="nucleotide sequence ID" value="NZ_CP169062.1"/>
</dbReference>
<dbReference type="SMR" id="C5BH95"/>
<dbReference type="STRING" id="67780.B6E78_14665"/>
<dbReference type="GeneID" id="69537868"/>
<dbReference type="KEGG" id="eic:NT01EI_0810"/>
<dbReference type="PATRIC" id="fig|634503.3.peg.735"/>
<dbReference type="HOGENOM" id="CLU_024773_0_0_6"/>
<dbReference type="OrthoDB" id="9802238at2"/>
<dbReference type="UniPathway" id="UPA00068">
    <property type="reaction ID" value="UER00106"/>
</dbReference>
<dbReference type="Proteomes" id="UP000001485">
    <property type="component" value="Chromosome"/>
</dbReference>
<dbReference type="GO" id="GO:0005737">
    <property type="term" value="C:cytoplasm"/>
    <property type="evidence" value="ECO:0007669"/>
    <property type="project" value="UniProtKB-SubCell"/>
</dbReference>
<dbReference type="GO" id="GO:0004042">
    <property type="term" value="F:L-glutamate N-acetyltransferase activity"/>
    <property type="evidence" value="ECO:0007669"/>
    <property type="project" value="UniProtKB-UniRule"/>
</dbReference>
<dbReference type="GO" id="GO:0006526">
    <property type="term" value="P:L-arginine biosynthetic process"/>
    <property type="evidence" value="ECO:0007669"/>
    <property type="project" value="UniProtKB-UniRule"/>
</dbReference>
<dbReference type="CDD" id="cd04237">
    <property type="entry name" value="AAK_NAGS-ABP"/>
    <property type="match status" value="1"/>
</dbReference>
<dbReference type="CDD" id="cd04301">
    <property type="entry name" value="NAT_SF"/>
    <property type="match status" value="1"/>
</dbReference>
<dbReference type="FunFam" id="3.40.1160.10:FF:000005">
    <property type="entry name" value="Amino-acid acetyltransferase"/>
    <property type="match status" value="1"/>
</dbReference>
<dbReference type="FunFam" id="3.40.630.30:FF:000009">
    <property type="entry name" value="Amino-acid acetyltransferase"/>
    <property type="match status" value="1"/>
</dbReference>
<dbReference type="Gene3D" id="3.40.630.30">
    <property type="match status" value="1"/>
</dbReference>
<dbReference type="Gene3D" id="3.40.1160.10">
    <property type="entry name" value="Acetylglutamate kinase-like"/>
    <property type="match status" value="1"/>
</dbReference>
<dbReference type="HAMAP" id="MF_01105">
    <property type="entry name" value="N_acetyl_glu_synth"/>
    <property type="match status" value="1"/>
</dbReference>
<dbReference type="InterPro" id="IPR036393">
    <property type="entry name" value="AceGlu_kinase-like_sf"/>
</dbReference>
<dbReference type="InterPro" id="IPR016181">
    <property type="entry name" value="Acyl_CoA_acyltransferase"/>
</dbReference>
<dbReference type="InterPro" id="IPR001048">
    <property type="entry name" value="Asp/Glu/Uridylate_kinase"/>
</dbReference>
<dbReference type="InterPro" id="IPR000182">
    <property type="entry name" value="GNAT_dom"/>
</dbReference>
<dbReference type="InterPro" id="IPR033719">
    <property type="entry name" value="NAGS_kin"/>
</dbReference>
<dbReference type="InterPro" id="IPR010167">
    <property type="entry name" value="NH2A_AcTrfase"/>
</dbReference>
<dbReference type="NCBIfam" id="TIGR01890">
    <property type="entry name" value="N-Ac-Glu-synth"/>
    <property type="match status" value="1"/>
</dbReference>
<dbReference type="NCBIfam" id="NF003641">
    <property type="entry name" value="PRK05279.1"/>
    <property type="match status" value="1"/>
</dbReference>
<dbReference type="PANTHER" id="PTHR30602">
    <property type="entry name" value="AMINO-ACID ACETYLTRANSFERASE"/>
    <property type="match status" value="1"/>
</dbReference>
<dbReference type="PANTHER" id="PTHR30602:SF12">
    <property type="entry name" value="AMINO-ACID ACETYLTRANSFERASE NAGS1, CHLOROPLASTIC-RELATED"/>
    <property type="match status" value="1"/>
</dbReference>
<dbReference type="Pfam" id="PF00696">
    <property type="entry name" value="AA_kinase"/>
    <property type="match status" value="1"/>
</dbReference>
<dbReference type="Pfam" id="PF00583">
    <property type="entry name" value="Acetyltransf_1"/>
    <property type="match status" value="1"/>
</dbReference>
<dbReference type="PIRSF" id="PIRSF000423">
    <property type="entry name" value="ArgA"/>
    <property type="match status" value="1"/>
</dbReference>
<dbReference type="SUPFAM" id="SSF55729">
    <property type="entry name" value="Acyl-CoA N-acyltransferases (Nat)"/>
    <property type="match status" value="1"/>
</dbReference>
<dbReference type="SUPFAM" id="SSF53633">
    <property type="entry name" value="Carbamate kinase-like"/>
    <property type="match status" value="1"/>
</dbReference>
<dbReference type="PROSITE" id="PS51186">
    <property type="entry name" value="GNAT"/>
    <property type="match status" value="1"/>
</dbReference>
<feature type="chain" id="PRO_1000213558" description="Amino-acid acetyltransferase">
    <location>
        <begin position="1"/>
        <end position="441"/>
    </location>
</feature>
<feature type="domain" description="N-acetyltransferase" evidence="1">
    <location>
        <begin position="295"/>
        <end position="434"/>
    </location>
</feature>
<evidence type="ECO:0000255" key="1">
    <source>
        <dbReference type="HAMAP-Rule" id="MF_01105"/>
    </source>
</evidence>